<evidence type="ECO:0000255" key="1">
    <source>
        <dbReference type="HAMAP-Rule" id="MF_00072"/>
    </source>
</evidence>
<name>RF3_SHESR</name>
<feature type="chain" id="PRO_1000023680" description="Peptide chain release factor 3">
    <location>
        <begin position="1"/>
        <end position="526"/>
    </location>
</feature>
<feature type="domain" description="tr-type G">
    <location>
        <begin position="9"/>
        <end position="277"/>
    </location>
</feature>
<feature type="binding site" evidence="1">
    <location>
        <begin position="18"/>
        <end position="25"/>
    </location>
    <ligand>
        <name>GTP</name>
        <dbReference type="ChEBI" id="CHEBI:37565"/>
    </ligand>
</feature>
<feature type="binding site" evidence="1">
    <location>
        <begin position="86"/>
        <end position="90"/>
    </location>
    <ligand>
        <name>GTP</name>
        <dbReference type="ChEBI" id="CHEBI:37565"/>
    </ligand>
</feature>
<feature type="binding site" evidence="1">
    <location>
        <begin position="140"/>
        <end position="143"/>
    </location>
    <ligand>
        <name>GTP</name>
        <dbReference type="ChEBI" id="CHEBI:37565"/>
    </ligand>
</feature>
<gene>
    <name evidence="1" type="primary">prfC</name>
    <name type="ordered locus">Shewmr7_1098</name>
</gene>
<protein>
    <recommendedName>
        <fullName evidence="1">Peptide chain release factor 3</fullName>
        <shortName evidence="1">RF-3</shortName>
    </recommendedName>
</protein>
<reference key="1">
    <citation type="submission" date="2006-08" db="EMBL/GenBank/DDBJ databases">
        <title>Complete sequence of chromosome 1 of Shewanella sp. MR-7.</title>
        <authorList>
            <person name="Copeland A."/>
            <person name="Lucas S."/>
            <person name="Lapidus A."/>
            <person name="Barry K."/>
            <person name="Detter J.C."/>
            <person name="Glavina del Rio T."/>
            <person name="Hammon N."/>
            <person name="Israni S."/>
            <person name="Dalin E."/>
            <person name="Tice H."/>
            <person name="Pitluck S."/>
            <person name="Kiss H."/>
            <person name="Brettin T."/>
            <person name="Bruce D."/>
            <person name="Han C."/>
            <person name="Tapia R."/>
            <person name="Gilna P."/>
            <person name="Schmutz J."/>
            <person name="Larimer F."/>
            <person name="Land M."/>
            <person name="Hauser L."/>
            <person name="Kyrpides N."/>
            <person name="Mikhailova N."/>
            <person name="Nealson K."/>
            <person name="Konstantinidis K."/>
            <person name="Klappenbach J."/>
            <person name="Tiedje J."/>
            <person name="Richardson P."/>
        </authorList>
    </citation>
    <scope>NUCLEOTIDE SEQUENCE [LARGE SCALE GENOMIC DNA]</scope>
    <source>
        <strain>MR-7</strain>
    </source>
</reference>
<dbReference type="EMBL" id="CP000444">
    <property type="protein sequence ID" value="ABI42097.1"/>
    <property type="molecule type" value="Genomic_DNA"/>
</dbReference>
<dbReference type="SMR" id="Q0HXQ8"/>
<dbReference type="KEGG" id="shm:Shewmr7_1098"/>
<dbReference type="HOGENOM" id="CLU_002794_2_1_6"/>
<dbReference type="GO" id="GO:0005829">
    <property type="term" value="C:cytosol"/>
    <property type="evidence" value="ECO:0007669"/>
    <property type="project" value="TreeGrafter"/>
</dbReference>
<dbReference type="GO" id="GO:0005525">
    <property type="term" value="F:GTP binding"/>
    <property type="evidence" value="ECO:0007669"/>
    <property type="project" value="UniProtKB-UniRule"/>
</dbReference>
<dbReference type="GO" id="GO:0003924">
    <property type="term" value="F:GTPase activity"/>
    <property type="evidence" value="ECO:0007669"/>
    <property type="project" value="InterPro"/>
</dbReference>
<dbReference type="GO" id="GO:0097216">
    <property type="term" value="F:guanosine tetraphosphate binding"/>
    <property type="evidence" value="ECO:0007669"/>
    <property type="project" value="UniProtKB-ARBA"/>
</dbReference>
<dbReference type="GO" id="GO:0016150">
    <property type="term" value="F:translation release factor activity, codon nonspecific"/>
    <property type="evidence" value="ECO:0007669"/>
    <property type="project" value="TreeGrafter"/>
</dbReference>
<dbReference type="GO" id="GO:0016149">
    <property type="term" value="F:translation release factor activity, codon specific"/>
    <property type="evidence" value="ECO:0007669"/>
    <property type="project" value="UniProtKB-UniRule"/>
</dbReference>
<dbReference type="GO" id="GO:0006449">
    <property type="term" value="P:regulation of translational termination"/>
    <property type="evidence" value="ECO:0007669"/>
    <property type="project" value="UniProtKB-UniRule"/>
</dbReference>
<dbReference type="CDD" id="cd04169">
    <property type="entry name" value="RF3"/>
    <property type="match status" value="1"/>
</dbReference>
<dbReference type="CDD" id="cd03689">
    <property type="entry name" value="RF3_II"/>
    <property type="match status" value="1"/>
</dbReference>
<dbReference type="CDD" id="cd16259">
    <property type="entry name" value="RF3_III"/>
    <property type="match status" value="1"/>
</dbReference>
<dbReference type="FunFam" id="2.40.30.10:FF:000040">
    <property type="entry name" value="Peptide chain release factor 3"/>
    <property type="match status" value="1"/>
</dbReference>
<dbReference type="FunFam" id="3.30.70.3280:FF:000001">
    <property type="entry name" value="Peptide chain release factor 3"/>
    <property type="match status" value="1"/>
</dbReference>
<dbReference type="FunFam" id="3.40.50.300:FF:000542">
    <property type="entry name" value="Peptide chain release factor 3"/>
    <property type="match status" value="1"/>
</dbReference>
<dbReference type="Gene3D" id="3.40.50.300">
    <property type="entry name" value="P-loop containing nucleotide triphosphate hydrolases"/>
    <property type="match status" value="2"/>
</dbReference>
<dbReference type="Gene3D" id="3.30.70.3280">
    <property type="entry name" value="Peptide chain release factor 3, domain III"/>
    <property type="match status" value="1"/>
</dbReference>
<dbReference type="HAMAP" id="MF_00072">
    <property type="entry name" value="Rel_fac_3"/>
    <property type="match status" value="1"/>
</dbReference>
<dbReference type="InterPro" id="IPR053905">
    <property type="entry name" value="EF-G-like_DII"/>
</dbReference>
<dbReference type="InterPro" id="IPR035647">
    <property type="entry name" value="EFG_III/V"/>
</dbReference>
<dbReference type="InterPro" id="IPR031157">
    <property type="entry name" value="G_TR_CS"/>
</dbReference>
<dbReference type="InterPro" id="IPR027417">
    <property type="entry name" value="P-loop_NTPase"/>
</dbReference>
<dbReference type="InterPro" id="IPR004548">
    <property type="entry name" value="PrfC"/>
</dbReference>
<dbReference type="InterPro" id="IPR032090">
    <property type="entry name" value="RF3_C"/>
</dbReference>
<dbReference type="InterPro" id="IPR038467">
    <property type="entry name" value="RF3_dom_3_sf"/>
</dbReference>
<dbReference type="InterPro" id="IPR041732">
    <property type="entry name" value="RF3_GTP-bd"/>
</dbReference>
<dbReference type="InterPro" id="IPR005225">
    <property type="entry name" value="Small_GTP-bd"/>
</dbReference>
<dbReference type="InterPro" id="IPR000795">
    <property type="entry name" value="T_Tr_GTP-bd_dom"/>
</dbReference>
<dbReference type="InterPro" id="IPR009000">
    <property type="entry name" value="Transl_B-barrel_sf"/>
</dbReference>
<dbReference type="NCBIfam" id="TIGR00503">
    <property type="entry name" value="prfC"/>
    <property type="match status" value="1"/>
</dbReference>
<dbReference type="NCBIfam" id="NF001964">
    <property type="entry name" value="PRK00741.1"/>
    <property type="match status" value="1"/>
</dbReference>
<dbReference type="NCBIfam" id="TIGR00231">
    <property type="entry name" value="small_GTP"/>
    <property type="match status" value="1"/>
</dbReference>
<dbReference type="PANTHER" id="PTHR43556">
    <property type="entry name" value="PEPTIDE CHAIN RELEASE FACTOR RF3"/>
    <property type="match status" value="1"/>
</dbReference>
<dbReference type="PANTHER" id="PTHR43556:SF2">
    <property type="entry name" value="PEPTIDE CHAIN RELEASE FACTOR RF3"/>
    <property type="match status" value="1"/>
</dbReference>
<dbReference type="Pfam" id="PF22042">
    <property type="entry name" value="EF-G_D2"/>
    <property type="match status" value="1"/>
</dbReference>
<dbReference type="Pfam" id="PF00009">
    <property type="entry name" value="GTP_EFTU"/>
    <property type="match status" value="1"/>
</dbReference>
<dbReference type="Pfam" id="PF16658">
    <property type="entry name" value="RF3_C"/>
    <property type="match status" value="1"/>
</dbReference>
<dbReference type="PRINTS" id="PR00315">
    <property type="entry name" value="ELONGATNFCT"/>
</dbReference>
<dbReference type="SUPFAM" id="SSF54980">
    <property type="entry name" value="EF-G C-terminal domain-like"/>
    <property type="match status" value="1"/>
</dbReference>
<dbReference type="SUPFAM" id="SSF52540">
    <property type="entry name" value="P-loop containing nucleoside triphosphate hydrolases"/>
    <property type="match status" value="1"/>
</dbReference>
<dbReference type="SUPFAM" id="SSF50447">
    <property type="entry name" value="Translation proteins"/>
    <property type="match status" value="1"/>
</dbReference>
<dbReference type="PROSITE" id="PS00301">
    <property type="entry name" value="G_TR_1"/>
    <property type="match status" value="1"/>
</dbReference>
<dbReference type="PROSITE" id="PS51722">
    <property type="entry name" value="G_TR_2"/>
    <property type="match status" value="1"/>
</dbReference>
<proteinExistence type="inferred from homology"/>
<organism>
    <name type="scientific">Shewanella sp. (strain MR-7)</name>
    <dbReference type="NCBI Taxonomy" id="60481"/>
    <lineage>
        <taxon>Bacteria</taxon>
        <taxon>Pseudomonadati</taxon>
        <taxon>Pseudomonadota</taxon>
        <taxon>Gammaproteobacteria</taxon>
        <taxon>Alteromonadales</taxon>
        <taxon>Shewanellaceae</taxon>
        <taxon>Shewanella</taxon>
    </lineage>
</organism>
<comment type="function">
    <text evidence="1">Increases the formation of ribosomal termination complexes and stimulates activities of RF-1 and RF-2. It binds guanine nucleotides and has strong preference for UGA stop codons. It may interact directly with the ribosome. The stimulation of RF-1 and RF-2 is significantly reduced by GTP and GDP, but not by GMP.</text>
</comment>
<comment type="subcellular location">
    <subcellularLocation>
        <location evidence="1">Cytoplasm</location>
    </subcellularLocation>
</comment>
<comment type="similarity">
    <text evidence="1">Belongs to the TRAFAC class translation factor GTPase superfamily. Classic translation factor GTPase family. PrfC subfamily.</text>
</comment>
<accession>Q0HXQ8</accession>
<keyword id="KW-0963">Cytoplasm</keyword>
<keyword id="KW-0342">GTP-binding</keyword>
<keyword id="KW-0547">Nucleotide-binding</keyword>
<keyword id="KW-0648">Protein biosynthesis</keyword>
<sequence>MSDNKVEVDKRRTFAIISHPDAGKTTITEKVLLFGNALQKAGTVKGKKSGQHAKSDWMEMEKDRGISITTSVMQFPYGGALVNLLDTPGHEDFSEDTYRTLTAVDSCLMVIDSAKGVEDRTIKLMEVTRLRDTPIVTFMNKLDRDIRDPIELMDEVEDVLNIACAPITWPIGSGKEFKGVYHILRDEVVLYQSGMGHTIQERRVIEGIDNPELDKAIGSYAADLRDEMELVRGASNEFDHQAFLKGELTPVFFGTALGNFGVDHILDGIVEWAPKPLPRESDARMIMPDEEKFTGFVFKIQANMDPKHRDRVAFMRVCSGRYEQGMKMHHVRIGKDVNVSDALTFMAGDRERAEVAYPGDIIGLHNHGTIRIGDTFTQGEKFRFTGVPNFAPEMFRRIRLRDPLKQKQLLKGLVQLSEEGAVQVFRPLDTNDLIVGAVGVLQFEVVVGRLKSEYNVEAIYEGISVSTARWVYCKDERKLEEFRRKCSQNLALDGGDNLTYIAPTMVNLNLSMERYPDIEFAKTREH</sequence>